<comment type="function">
    <text evidence="1">Binds to DNA and alters its conformation. May be involved in regulation of gene expression, nucleoid organization and DNA protection.</text>
</comment>
<comment type="subunit">
    <text evidence="1">Homodimer.</text>
</comment>
<comment type="subcellular location">
    <subcellularLocation>
        <location evidence="1">Cytoplasm</location>
        <location evidence="1">Nucleoid</location>
    </subcellularLocation>
</comment>
<comment type="similarity">
    <text evidence="1">Belongs to the YbaB/EbfC family.</text>
</comment>
<keyword id="KW-0963">Cytoplasm</keyword>
<keyword id="KW-0238">DNA-binding</keyword>
<accession>Q07H53</accession>
<sequence length="105" mass="11223">MADFLGMMKQAAQLQSKMKEMQSELDRIEVEGISGGGLVNVRMSAKMEVRAVKIDPSLLNPDEVGVLEDLLVSALADAHRKAEAAMQDKMKTLTGGLSLPPGLGL</sequence>
<feature type="chain" id="PRO_1000003808" description="Nucleoid-associated protein RPE_4812">
    <location>
        <begin position="1"/>
        <end position="105"/>
    </location>
</feature>
<proteinExistence type="inferred from homology"/>
<gene>
    <name type="ordered locus">RPE_4812</name>
</gene>
<reference key="1">
    <citation type="submission" date="2006-09" db="EMBL/GenBank/DDBJ databases">
        <title>Complete sequence of Rhodopseudomonas palustris BisA53.</title>
        <authorList>
            <consortium name="US DOE Joint Genome Institute"/>
            <person name="Copeland A."/>
            <person name="Lucas S."/>
            <person name="Lapidus A."/>
            <person name="Barry K."/>
            <person name="Detter J.C."/>
            <person name="Glavina del Rio T."/>
            <person name="Hammon N."/>
            <person name="Israni S."/>
            <person name="Dalin E."/>
            <person name="Tice H."/>
            <person name="Pitluck S."/>
            <person name="Chain P."/>
            <person name="Malfatti S."/>
            <person name="Shin M."/>
            <person name="Vergez L."/>
            <person name="Schmutz J."/>
            <person name="Larimer F."/>
            <person name="Land M."/>
            <person name="Hauser L."/>
            <person name="Pelletier D.A."/>
            <person name="Kyrpides N."/>
            <person name="Kim E."/>
            <person name="Harwood C.S."/>
            <person name="Oda Y."/>
            <person name="Richardson P."/>
        </authorList>
    </citation>
    <scope>NUCLEOTIDE SEQUENCE [LARGE SCALE GENOMIC DNA]</scope>
    <source>
        <strain>BisA53</strain>
    </source>
</reference>
<name>Y4812_RHOP5</name>
<evidence type="ECO:0000255" key="1">
    <source>
        <dbReference type="HAMAP-Rule" id="MF_00274"/>
    </source>
</evidence>
<dbReference type="EMBL" id="CP000463">
    <property type="protein sequence ID" value="ABJ08731.1"/>
    <property type="molecule type" value="Genomic_DNA"/>
</dbReference>
<dbReference type="SMR" id="Q07H53"/>
<dbReference type="STRING" id="316055.RPE_4812"/>
<dbReference type="KEGG" id="rpe:RPE_4812"/>
<dbReference type="eggNOG" id="COG0718">
    <property type="taxonomic scope" value="Bacteria"/>
</dbReference>
<dbReference type="HOGENOM" id="CLU_140930_0_1_5"/>
<dbReference type="OrthoDB" id="9803080at2"/>
<dbReference type="GO" id="GO:0043590">
    <property type="term" value="C:bacterial nucleoid"/>
    <property type="evidence" value="ECO:0007669"/>
    <property type="project" value="UniProtKB-UniRule"/>
</dbReference>
<dbReference type="GO" id="GO:0005829">
    <property type="term" value="C:cytosol"/>
    <property type="evidence" value="ECO:0007669"/>
    <property type="project" value="TreeGrafter"/>
</dbReference>
<dbReference type="GO" id="GO:0003677">
    <property type="term" value="F:DNA binding"/>
    <property type="evidence" value="ECO:0007669"/>
    <property type="project" value="UniProtKB-UniRule"/>
</dbReference>
<dbReference type="Gene3D" id="3.30.1310.10">
    <property type="entry name" value="Nucleoid-associated protein YbaB-like domain"/>
    <property type="match status" value="1"/>
</dbReference>
<dbReference type="HAMAP" id="MF_00274">
    <property type="entry name" value="DNA_YbaB_EbfC"/>
    <property type="match status" value="1"/>
</dbReference>
<dbReference type="InterPro" id="IPR036894">
    <property type="entry name" value="YbaB-like_sf"/>
</dbReference>
<dbReference type="InterPro" id="IPR004401">
    <property type="entry name" value="YbaB/EbfC"/>
</dbReference>
<dbReference type="NCBIfam" id="TIGR00103">
    <property type="entry name" value="DNA_YbaB_EbfC"/>
    <property type="match status" value="1"/>
</dbReference>
<dbReference type="PANTHER" id="PTHR33449">
    <property type="entry name" value="NUCLEOID-ASSOCIATED PROTEIN YBAB"/>
    <property type="match status" value="1"/>
</dbReference>
<dbReference type="PANTHER" id="PTHR33449:SF1">
    <property type="entry name" value="NUCLEOID-ASSOCIATED PROTEIN YBAB"/>
    <property type="match status" value="1"/>
</dbReference>
<dbReference type="Pfam" id="PF02575">
    <property type="entry name" value="YbaB_DNA_bd"/>
    <property type="match status" value="1"/>
</dbReference>
<dbReference type="PIRSF" id="PIRSF004555">
    <property type="entry name" value="UCP004555"/>
    <property type="match status" value="1"/>
</dbReference>
<dbReference type="SUPFAM" id="SSF82607">
    <property type="entry name" value="YbaB-like"/>
    <property type="match status" value="1"/>
</dbReference>
<protein>
    <recommendedName>
        <fullName evidence="1">Nucleoid-associated protein RPE_4812</fullName>
    </recommendedName>
</protein>
<organism>
    <name type="scientific">Rhodopseudomonas palustris (strain BisA53)</name>
    <dbReference type="NCBI Taxonomy" id="316055"/>
    <lineage>
        <taxon>Bacteria</taxon>
        <taxon>Pseudomonadati</taxon>
        <taxon>Pseudomonadota</taxon>
        <taxon>Alphaproteobacteria</taxon>
        <taxon>Hyphomicrobiales</taxon>
        <taxon>Nitrobacteraceae</taxon>
        <taxon>Rhodopseudomonas</taxon>
    </lineage>
</organism>